<reference key="1">
    <citation type="submission" date="2006-08" db="EMBL/GenBank/DDBJ databases">
        <title>Complete sequence of Shewanella frigidimarina NCIMB 400.</title>
        <authorList>
            <consortium name="US DOE Joint Genome Institute"/>
            <person name="Copeland A."/>
            <person name="Lucas S."/>
            <person name="Lapidus A."/>
            <person name="Barry K."/>
            <person name="Detter J.C."/>
            <person name="Glavina del Rio T."/>
            <person name="Hammon N."/>
            <person name="Israni S."/>
            <person name="Dalin E."/>
            <person name="Tice H."/>
            <person name="Pitluck S."/>
            <person name="Fredrickson J.K."/>
            <person name="Kolker E."/>
            <person name="McCuel L.A."/>
            <person name="DiChristina T."/>
            <person name="Nealson K.H."/>
            <person name="Newman D."/>
            <person name="Tiedje J.M."/>
            <person name="Zhou J."/>
            <person name="Romine M.F."/>
            <person name="Culley D.E."/>
            <person name="Serres M."/>
            <person name="Chertkov O."/>
            <person name="Brettin T."/>
            <person name="Bruce D."/>
            <person name="Han C."/>
            <person name="Tapia R."/>
            <person name="Gilna P."/>
            <person name="Schmutz J."/>
            <person name="Larimer F."/>
            <person name="Land M."/>
            <person name="Hauser L."/>
            <person name="Kyrpides N."/>
            <person name="Mikhailova N."/>
            <person name="Richardson P."/>
        </authorList>
    </citation>
    <scope>NUCLEOTIDE SEQUENCE [LARGE SCALE GENOMIC DNA]</scope>
    <source>
        <strain>NCIMB 400</strain>
    </source>
</reference>
<evidence type="ECO:0000255" key="1">
    <source>
        <dbReference type="HAMAP-Rule" id="MF_01959"/>
    </source>
</evidence>
<evidence type="ECO:0000256" key="2">
    <source>
        <dbReference type="SAM" id="MobiDB-lite"/>
    </source>
</evidence>
<sequence length="161" mass="17581">MNPRRKKRLTLAVALIAGVAAVASLLLYALNSNLNLFYTPYEITHGKNDTGVMPEVGQRIRVGGMVTIGSMKRDPDSLHVEFAVHDSAGGTVFVTYDDLLPDLFREGQGIVAQGVLVESGKLEATEVLAKHDENYMPPEVAEAMGQTHEKPTYNQKALEDK</sequence>
<organism>
    <name type="scientific">Shewanella frigidimarina (strain NCIMB 400)</name>
    <dbReference type="NCBI Taxonomy" id="318167"/>
    <lineage>
        <taxon>Bacteria</taxon>
        <taxon>Pseudomonadati</taxon>
        <taxon>Pseudomonadota</taxon>
        <taxon>Gammaproteobacteria</taxon>
        <taxon>Alteromonadales</taxon>
        <taxon>Shewanellaceae</taxon>
        <taxon>Shewanella</taxon>
    </lineage>
</organism>
<dbReference type="EMBL" id="CP000447">
    <property type="protein sequence ID" value="ABI70038.1"/>
    <property type="molecule type" value="Genomic_DNA"/>
</dbReference>
<dbReference type="RefSeq" id="WP_011635665.1">
    <property type="nucleotide sequence ID" value="NC_008345.1"/>
</dbReference>
<dbReference type="SMR" id="Q089M7"/>
<dbReference type="STRING" id="318167.Sfri_0175"/>
<dbReference type="KEGG" id="sfr:Sfri_0175"/>
<dbReference type="eggNOG" id="COG2332">
    <property type="taxonomic scope" value="Bacteria"/>
</dbReference>
<dbReference type="HOGENOM" id="CLU_079503_1_0_6"/>
<dbReference type="OrthoDB" id="9793584at2"/>
<dbReference type="Proteomes" id="UP000000684">
    <property type="component" value="Chromosome"/>
</dbReference>
<dbReference type="GO" id="GO:0005886">
    <property type="term" value="C:plasma membrane"/>
    <property type="evidence" value="ECO:0007669"/>
    <property type="project" value="UniProtKB-SubCell"/>
</dbReference>
<dbReference type="GO" id="GO:0020037">
    <property type="term" value="F:heme binding"/>
    <property type="evidence" value="ECO:0007669"/>
    <property type="project" value="InterPro"/>
</dbReference>
<dbReference type="GO" id="GO:0046872">
    <property type="term" value="F:metal ion binding"/>
    <property type="evidence" value="ECO:0007669"/>
    <property type="project" value="UniProtKB-KW"/>
</dbReference>
<dbReference type="GO" id="GO:0017004">
    <property type="term" value="P:cytochrome complex assembly"/>
    <property type="evidence" value="ECO:0007669"/>
    <property type="project" value="UniProtKB-KW"/>
</dbReference>
<dbReference type="FunFam" id="2.40.50.140:FF:000104">
    <property type="entry name" value="Cytochrome c-type biogenesis protein CcmE"/>
    <property type="match status" value="1"/>
</dbReference>
<dbReference type="Gene3D" id="2.40.50.140">
    <property type="entry name" value="Nucleic acid-binding proteins"/>
    <property type="match status" value="1"/>
</dbReference>
<dbReference type="HAMAP" id="MF_01959">
    <property type="entry name" value="CcmE"/>
    <property type="match status" value="1"/>
</dbReference>
<dbReference type="InterPro" id="IPR004329">
    <property type="entry name" value="CcmE"/>
</dbReference>
<dbReference type="InterPro" id="IPR036127">
    <property type="entry name" value="CcmE-like_sf"/>
</dbReference>
<dbReference type="InterPro" id="IPR012340">
    <property type="entry name" value="NA-bd_OB-fold"/>
</dbReference>
<dbReference type="NCBIfam" id="NF009638">
    <property type="entry name" value="PRK13165.1"/>
    <property type="match status" value="1"/>
</dbReference>
<dbReference type="NCBIfam" id="NF009729">
    <property type="entry name" value="PRK13254.1-3"/>
    <property type="match status" value="1"/>
</dbReference>
<dbReference type="PANTHER" id="PTHR34128">
    <property type="entry name" value="CYTOCHROME C-TYPE BIOGENESIS PROTEIN CCME HOMOLOG, MITOCHONDRIAL"/>
    <property type="match status" value="1"/>
</dbReference>
<dbReference type="PANTHER" id="PTHR34128:SF2">
    <property type="entry name" value="CYTOCHROME C-TYPE BIOGENESIS PROTEIN CCME HOMOLOG, MITOCHONDRIAL"/>
    <property type="match status" value="1"/>
</dbReference>
<dbReference type="Pfam" id="PF03100">
    <property type="entry name" value="CcmE"/>
    <property type="match status" value="1"/>
</dbReference>
<dbReference type="SUPFAM" id="SSF82093">
    <property type="entry name" value="Heme chaperone CcmE"/>
    <property type="match status" value="1"/>
</dbReference>
<comment type="function">
    <text evidence="1">Heme chaperone required for the biogenesis of c-type cytochromes. Transiently binds heme delivered by CcmC and transfers the heme to apo-cytochromes in a process facilitated by CcmF and CcmH.</text>
</comment>
<comment type="subcellular location">
    <subcellularLocation>
        <location evidence="1">Cell inner membrane</location>
        <topology evidence="1">Single-pass type II membrane protein</topology>
        <orientation evidence="1">Periplasmic side</orientation>
    </subcellularLocation>
</comment>
<comment type="similarity">
    <text evidence="1">Belongs to the CcmE/CycJ family.</text>
</comment>
<keyword id="KW-0997">Cell inner membrane</keyword>
<keyword id="KW-1003">Cell membrane</keyword>
<keyword id="KW-0201">Cytochrome c-type biogenesis</keyword>
<keyword id="KW-0349">Heme</keyword>
<keyword id="KW-0408">Iron</keyword>
<keyword id="KW-0472">Membrane</keyword>
<keyword id="KW-0479">Metal-binding</keyword>
<keyword id="KW-1185">Reference proteome</keyword>
<keyword id="KW-0735">Signal-anchor</keyword>
<keyword id="KW-0812">Transmembrane</keyword>
<keyword id="KW-1133">Transmembrane helix</keyword>
<proteinExistence type="inferred from homology"/>
<protein>
    <recommendedName>
        <fullName evidence="1">Cytochrome c-type biogenesis protein CcmE</fullName>
    </recommendedName>
    <alternativeName>
        <fullName evidence="1">Cytochrome c maturation protein E</fullName>
    </alternativeName>
    <alternativeName>
        <fullName evidence="1">Heme chaperone CcmE</fullName>
    </alternativeName>
</protein>
<name>CCME_SHEFN</name>
<feature type="chain" id="PRO_1000070855" description="Cytochrome c-type biogenesis protein CcmE">
    <location>
        <begin position="1"/>
        <end position="161"/>
    </location>
</feature>
<feature type="topological domain" description="Cytoplasmic" evidence="1">
    <location>
        <begin position="1"/>
        <end position="8"/>
    </location>
</feature>
<feature type="transmembrane region" description="Helical; Signal-anchor for type II membrane protein" evidence="1">
    <location>
        <begin position="9"/>
        <end position="29"/>
    </location>
</feature>
<feature type="topological domain" description="Periplasmic" evidence="1">
    <location>
        <begin position="30"/>
        <end position="161"/>
    </location>
</feature>
<feature type="region of interest" description="Disordered" evidence="2">
    <location>
        <begin position="142"/>
        <end position="161"/>
    </location>
</feature>
<feature type="compositionally biased region" description="Basic and acidic residues" evidence="2">
    <location>
        <begin position="147"/>
        <end position="161"/>
    </location>
</feature>
<feature type="binding site" description="covalent" evidence="1">
    <location>
        <position position="131"/>
    </location>
    <ligand>
        <name>heme</name>
        <dbReference type="ChEBI" id="CHEBI:30413"/>
    </ligand>
</feature>
<feature type="binding site" description="axial binding residue" evidence="1">
    <location>
        <position position="135"/>
    </location>
    <ligand>
        <name>heme</name>
        <dbReference type="ChEBI" id="CHEBI:30413"/>
    </ligand>
    <ligandPart>
        <name>Fe</name>
        <dbReference type="ChEBI" id="CHEBI:18248"/>
    </ligandPart>
</feature>
<accession>Q089M7</accession>
<gene>
    <name evidence="1" type="primary">ccmE</name>
    <name evidence="1" type="synonym">cycJ</name>
    <name type="ordered locus">Sfri_0175</name>
</gene>